<sequence length="502" mass="57543">MNNNNVTEATSRAQIRPYYDPDSFNAGYSAVFKPDEGVVDPHGYTIASKLNVINSSPTTKRMANALFKSSPMKKLSNSVNDGLSLEGSNGEITGLNNFEWAELVNIQKWRKIFEQLLDMFFRKYFQLLIQQPFDVARLLIQVGEFKIFKTTVDTNKPQAPIILRDEEGDGAAREGEEDAYDEEEIDFFPIERKIAEANSTAPIMAEETDHSHHEPTDISLTIAPQSLHTIDVINALFDQEGIRGLWKANNTTFIYNFLSLSIDTWFTGLLSSFLGVPDPYFMEVINSPDISKSFILALGAGVFTSIILLPVDLIRTRLIVTSFKKKKNVKTDGKNMVTNTRSLRQLIRCWSWRKNGVSIPLDMWSLTILQSINNSFFNKLFDLVIYNQFHIEKYSQTVMYNTMKFFSKSLELFIKLPLENLLRRCQLNYLLNDQRLSFKVDSTELIVKPKKYNGIWDVIRNNSNTNRGQLWNGWKVGVISLICGYGLQMMNKVDINMEQEKF</sequence>
<feature type="chain" id="PRO_0000270985" description="Mitochondrial fusion and transport protein UGO1">
    <location>
        <begin position="1"/>
        <end position="502"/>
    </location>
</feature>
<feature type="topological domain" description="Cytoplasmic" evidence="1">
    <location>
        <begin position="1"/>
        <end position="293"/>
    </location>
</feature>
<feature type="transmembrane region" description="Helical; Signal-anchor for type II membrane protein" evidence="1">
    <location>
        <begin position="294"/>
        <end position="314"/>
    </location>
</feature>
<feature type="topological domain" description="Mitochondrial intermembrane" evidence="1">
    <location>
        <begin position="315"/>
        <end position="502"/>
    </location>
</feature>
<feature type="repeat" description="Solcar" evidence="1">
    <location>
        <begin position="288"/>
        <end position="383"/>
    </location>
</feature>
<feature type="region of interest" description="Binds FZO1" evidence="6">
    <location>
        <begin position="1"/>
        <end position="294"/>
    </location>
</feature>
<feature type="region of interest" description="Binds MGM1" evidence="6">
    <location>
        <begin position="312"/>
        <end position="502"/>
    </location>
</feature>
<feature type="modified residue" description="N-acetylmethionine" evidence="10">
    <location>
        <position position="1"/>
    </location>
</feature>
<feature type="sequence conflict" description="In Ref. 1; AAB64924 and 2; no nucleotide entry." evidence="7" ref="1 2">
    <original>E</original>
    <variation>G</variation>
    <location>
        <position position="114"/>
    </location>
</feature>
<organism>
    <name type="scientific">Saccharomyces cerevisiae (strain ATCC 204508 / S288c)</name>
    <name type="common">Baker's yeast</name>
    <dbReference type="NCBI Taxonomy" id="559292"/>
    <lineage>
        <taxon>Eukaryota</taxon>
        <taxon>Fungi</taxon>
        <taxon>Dikarya</taxon>
        <taxon>Ascomycota</taxon>
        <taxon>Saccharomycotina</taxon>
        <taxon>Saccharomycetes</taxon>
        <taxon>Saccharomycetales</taxon>
        <taxon>Saccharomycetaceae</taxon>
        <taxon>Saccharomyces</taxon>
    </lineage>
</organism>
<protein>
    <recommendedName>
        <fullName>Mitochondrial fusion and transport protein UGO1</fullName>
    </recommendedName>
</protein>
<proteinExistence type="evidence at protein level"/>
<dbReference type="EMBL" id="U33050">
    <property type="protein sequence ID" value="AAB64924.2"/>
    <property type="molecule type" value="Genomic_DNA"/>
</dbReference>
<dbReference type="EMBL" id="BK006938">
    <property type="protein sequence ID" value="DAA12304.2"/>
    <property type="molecule type" value="Genomic_DNA"/>
</dbReference>
<dbReference type="PIR" id="S69637">
    <property type="entry name" value="S69637"/>
</dbReference>
<dbReference type="RefSeq" id="NP_010758.3">
    <property type="nucleotide sequence ID" value="NM_001180778.2"/>
</dbReference>
<dbReference type="BioGRID" id="32523">
    <property type="interactions" value="100"/>
</dbReference>
<dbReference type="ComplexPortal" id="CPX-161">
    <property type="entry name" value="FZO1-MGM1-UGO1 complex"/>
</dbReference>
<dbReference type="FunCoup" id="Q03327">
    <property type="interactions" value="43"/>
</dbReference>
<dbReference type="IntAct" id="Q03327">
    <property type="interactions" value="5"/>
</dbReference>
<dbReference type="MINT" id="Q03327"/>
<dbReference type="STRING" id="4932.YDR470C"/>
<dbReference type="TCDB" id="1.N.6.1.1">
    <property type="family name" value="the mitochondrial inner/outer membrane fusion (mmf) family"/>
</dbReference>
<dbReference type="iPTMnet" id="Q03327"/>
<dbReference type="PaxDb" id="4932-YDR470C"/>
<dbReference type="PeptideAtlas" id="Q03327"/>
<dbReference type="EnsemblFungi" id="YDR470C_mRNA">
    <property type="protein sequence ID" value="YDR470C"/>
    <property type="gene ID" value="YDR470C"/>
</dbReference>
<dbReference type="GeneID" id="852081"/>
<dbReference type="KEGG" id="sce:YDR470C"/>
<dbReference type="AGR" id="SGD:S000002878"/>
<dbReference type="SGD" id="S000002878">
    <property type="gene designation" value="UGO1"/>
</dbReference>
<dbReference type="VEuPathDB" id="FungiDB:YDR470C"/>
<dbReference type="eggNOG" id="ENOG502RQI2">
    <property type="taxonomic scope" value="Eukaryota"/>
</dbReference>
<dbReference type="HOGENOM" id="CLU_029376_0_0_1"/>
<dbReference type="InParanoid" id="Q03327"/>
<dbReference type="OMA" id="ELWRGWR"/>
<dbReference type="OrthoDB" id="77989at2759"/>
<dbReference type="BioCyc" id="YEAST:G3O-29997-MONOMER"/>
<dbReference type="BioGRID-ORCS" id="852081">
    <property type="hits" value="1 hit in 10 CRISPR screens"/>
</dbReference>
<dbReference type="PRO" id="PR:Q03327"/>
<dbReference type="Proteomes" id="UP000002311">
    <property type="component" value="Chromosome IV"/>
</dbReference>
<dbReference type="RNAct" id="Q03327">
    <property type="molecule type" value="protein"/>
</dbReference>
<dbReference type="GO" id="GO:0005741">
    <property type="term" value="C:mitochondrial outer membrane"/>
    <property type="evidence" value="ECO:0000314"/>
    <property type="project" value="SGD"/>
</dbReference>
<dbReference type="GO" id="GO:0005739">
    <property type="term" value="C:mitochondrion"/>
    <property type="evidence" value="ECO:0000314"/>
    <property type="project" value="ComplexPortal"/>
</dbReference>
<dbReference type="GO" id="GO:0008053">
    <property type="term" value="P:mitochondrial fusion"/>
    <property type="evidence" value="ECO:0000315"/>
    <property type="project" value="SGD"/>
</dbReference>
<dbReference type="GO" id="GO:1990627">
    <property type="term" value="P:mitochondrial inner membrane fusion"/>
    <property type="evidence" value="ECO:0000315"/>
    <property type="project" value="ComplexPortal"/>
</dbReference>
<dbReference type="GO" id="GO:1990626">
    <property type="term" value="P:mitochondrial outer membrane fusion"/>
    <property type="evidence" value="ECO:0000315"/>
    <property type="project" value="ComplexPortal"/>
</dbReference>
<dbReference type="FunFam" id="1.50.40.10:FF:000197">
    <property type="entry name" value="Ugo1p"/>
    <property type="match status" value="1"/>
</dbReference>
<dbReference type="Gene3D" id="1.50.40.10">
    <property type="entry name" value="Mitochondrial carrier domain"/>
    <property type="match status" value="1"/>
</dbReference>
<dbReference type="InterPro" id="IPR023395">
    <property type="entry name" value="Mt_carrier_dom_sf"/>
</dbReference>
<dbReference type="PANTHER" id="PTHR24089">
    <property type="entry name" value="SOLUTE CARRIER FAMILY 25"/>
    <property type="match status" value="1"/>
</dbReference>
<dbReference type="SUPFAM" id="SSF103506">
    <property type="entry name" value="Mitochondrial carrier"/>
    <property type="match status" value="1"/>
</dbReference>
<accession>Q03327</accession>
<accession>D6VT94</accession>
<reference evidence="7 8" key="1">
    <citation type="journal article" date="1997" name="Nature">
        <title>The nucleotide sequence of Saccharomyces cerevisiae chromosome IV.</title>
        <authorList>
            <person name="Jacq C."/>
            <person name="Alt-Moerbe J."/>
            <person name="Andre B."/>
            <person name="Arnold W."/>
            <person name="Bahr A."/>
            <person name="Ballesta J.P.G."/>
            <person name="Bargues M."/>
            <person name="Baron L."/>
            <person name="Becker A."/>
            <person name="Biteau N."/>
            <person name="Bloecker H."/>
            <person name="Blugeon C."/>
            <person name="Boskovic J."/>
            <person name="Brandt P."/>
            <person name="Brueckner M."/>
            <person name="Buitrago M.J."/>
            <person name="Coster F."/>
            <person name="Delaveau T."/>
            <person name="del Rey F."/>
            <person name="Dujon B."/>
            <person name="Eide L.G."/>
            <person name="Garcia-Cantalejo J.M."/>
            <person name="Goffeau A."/>
            <person name="Gomez-Peris A."/>
            <person name="Granotier C."/>
            <person name="Hanemann V."/>
            <person name="Hankeln T."/>
            <person name="Hoheisel J.D."/>
            <person name="Jaeger W."/>
            <person name="Jimenez A."/>
            <person name="Jonniaux J.-L."/>
            <person name="Kraemer C."/>
            <person name="Kuester H."/>
            <person name="Laamanen P."/>
            <person name="Legros Y."/>
            <person name="Louis E.J."/>
            <person name="Moeller-Rieker S."/>
            <person name="Monnet A."/>
            <person name="Moro M."/>
            <person name="Mueller-Auer S."/>
            <person name="Nussbaumer B."/>
            <person name="Paricio N."/>
            <person name="Paulin L."/>
            <person name="Perea J."/>
            <person name="Perez-Alonso M."/>
            <person name="Perez-Ortin J.E."/>
            <person name="Pohl T.M."/>
            <person name="Prydz H."/>
            <person name="Purnelle B."/>
            <person name="Rasmussen S.W."/>
            <person name="Remacha M.A."/>
            <person name="Revuelta J.L."/>
            <person name="Rieger M."/>
            <person name="Salom D."/>
            <person name="Saluz H.P."/>
            <person name="Saiz J.E."/>
            <person name="Saren A.-M."/>
            <person name="Schaefer M."/>
            <person name="Scharfe M."/>
            <person name="Schmidt E.R."/>
            <person name="Schneider C."/>
            <person name="Scholler P."/>
            <person name="Schwarz S."/>
            <person name="Soler-Mira A."/>
            <person name="Urrestarazu L.A."/>
            <person name="Verhasselt P."/>
            <person name="Vissers S."/>
            <person name="Voet M."/>
            <person name="Volckaert G."/>
            <person name="Wagner G."/>
            <person name="Wambutt R."/>
            <person name="Wedler E."/>
            <person name="Wedler H."/>
            <person name="Woelfl S."/>
            <person name="Harris D.E."/>
            <person name="Bowman S."/>
            <person name="Brown D."/>
            <person name="Churcher C.M."/>
            <person name="Connor R."/>
            <person name="Dedman K."/>
            <person name="Gentles S."/>
            <person name="Hamlin N."/>
            <person name="Hunt S."/>
            <person name="Jones L."/>
            <person name="McDonald S."/>
            <person name="Murphy L.D."/>
            <person name="Niblett D."/>
            <person name="Odell C."/>
            <person name="Oliver K."/>
            <person name="Rajandream M.A."/>
            <person name="Richards C."/>
            <person name="Shore L."/>
            <person name="Walsh S.V."/>
            <person name="Barrell B.G."/>
            <person name="Dietrich F.S."/>
            <person name="Mulligan J.T."/>
            <person name="Allen E."/>
            <person name="Araujo R."/>
            <person name="Aviles E."/>
            <person name="Berno A."/>
            <person name="Carpenter J."/>
            <person name="Chen E."/>
            <person name="Cherry J.M."/>
            <person name="Chung E."/>
            <person name="Duncan M."/>
            <person name="Hunicke-Smith S."/>
            <person name="Hyman R.W."/>
            <person name="Komp C."/>
            <person name="Lashkari D."/>
            <person name="Lew H."/>
            <person name="Lin D."/>
            <person name="Mosedale D."/>
            <person name="Nakahara K."/>
            <person name="Namath A."/>
            <person name="Oefner P."/>
            <person name="Oh C."/>
            <person name="Petel F.X."/>
            <person name="Roberts D."/>
            <person name="Schramm S."/>
            <person name="Schroeder M."/>
            <person name="Shogren T."/>
            <person name="Shroff N."/>
            <person name="Winant A."/>
            <person name="Yelton M.A."/>
            <person name="Botstein D."/>
            <person name="Davis R.W."/>
            <person name="Johnston M."/>
            <person name="Andrews S."/>
            <person name="Brinkman R."/>
            <person name="Cooper J."/>
            <person name="Ding H."/>
            <person name="Du Z."/>
            <person name="Favello A."/>
            <person name="Fulton L."/>
            <person name="Gattung S."/>
            <person name="Greco T."/>
            <person name="Hallsworth K."/>
            <person name="Hawkins J."/>
            <person name="Hillier L.W."/>
            <person name="Jier M."/>
            <person name="Johnson D."/>
            <person name="Johnston L."/>
            <person name="Kirsten J."/>
            <person name="Kucaba T."/>
            <person name="Langston Y."/>
            <person name="Latreille P."/>
            <person name="Le T."/>
            <person name="Mardis E."/>
            <person name="Menezes S."/>
            <person name="Miller N."/>
            <person name="Nhan M."/>
            <person name="Pauley A."/>
            <person name="Peluso D."/>
            <person name="Rifkin L."/>
            <person name="Riles L."/>
            <person name="Taich A."/>
            <person name="Trevaskis E."/>
            <person name="Vignati D."/>
            <person name="Wilcox L."/>
            <person name="Wohldman P."/>
            <person name="Vaudin M."/>
            <person name="Wilson R."/>
            <person name="Waterston R."/>
            <person name="Albermann K."/>
            <person name="Hani J."/>
            <person name="Heumann K."/>
            <person name="Kleine K."/>
            <person name="Mewes H.-W."/>
            <person name="Zollner A."/>
            <person name="Zaccaria P."/>
        </authorList>
    </citation>
    <scope>NUCLEOTIDE SEQUENCE [LARGE SCALE GENOMIC DNA]</scope>
    <source>
        <strain>ATCC 204508 / S288c</strain>
    </source>
</reference>
<reference evidence="7" key="2">
    <citation type="journal article" date="2000" name="Biochim. Biophys. Acta">
        <title>The yeast mitochondrial transport proteins: new sequences and consensus residues, lack of direct relation between consensus residues and transmembrane helices, expression patterns of the transport protein genes, and protein-protein interactions with other proteins.</title>
        <authorList>
            <person name="Belenkiy R."/>
            <person name="Haefele A."/>
            <person name="Eisen M.B."/>
            <person name="Wohlrab H."/>
        </authorList>
    </citation>
    <scope>SEQUENCE REVISION TO 114</scope>
</reference>
<reference key="3">
    <citation type="journal article" date="2014" name="G3 (Bethesda)">
        <title>The reference genome sequence of Saccharomyces cerevisiae: Then and now.</title>
        <authorList>
            <person name="Engel S.R."/>
            <person name="Dietrich F.S."/>
            <person name="Fisk D.G."/>
            <person name="Binkley G."/>
            <person name="Balakrishnan R."/>
            <person name="Costanzo M.C."/>
            <person name="Dwight S.S."/>
            <person name="Hitz B.C."/>
            <person name="Karra K."/>
            <person name="Nash R.S."/>
            <person name="Weng S."/>
            <person name="Wong E.D."/>
            <person name="Lloyd P."/>
            <person name="Skrzypek M.S."/>
            <person name="Miyasato S.R."/>
            <person name="Simison M."/>
            <person name="Cherry J.M."/>
        </authorList>
    </citation>
    <scope>GENOME REANNOTATION</scope>
    <scope>SEQUENCE REVISION TO 114</scope>
    <source>
        <strain>ATCC 204508 / S288c</strain>
    </source>
</reference>
<reference evidence="7" key="4">
    <citation type="journal article" date="2001" name="J. Cell Biol.">
        <title>UGO1 encodes an outer membrane protein required for mitochondrial fusion.</title>
        <authorList>
            <person name="Sesaki H."/>
            <person name="Jensen R.E."/>
        </authorList>
    </citation>
    <scope>FUNCTION</scope>
    <scope>SUBCELLULAR LOCATION</scope>
    <scope>TOPOLOGY</scope>
</reference>
<reference evidence="7" key="5">
    <citation type="journal article" date="2003" name="J. Cell Biol.">
        <title>The intramitochondrial dynamin-related GTPase, Mgm1p, is a component of a protein complex that mediates mitochondrial fusion.</title>
        <authorList>
            <person name="Wong E.D."/>
            <person name="Wagner J.A."/>
            <person name="Scott S.V."/>
            <person name="Okreglak V."/>
            <person name="Holewinske T.J."/>
            <person name="Cassidy-Stone A."/>
            <person name="Nunnari J."/>
        </authorList>
    </citation>
    <scope>INTERACTION WITH FZO1 AND MGM1</scope>
</reference>
<reference evidence="7" key="6">
    <citation type="journal article" date="2003" name="Mol. Biol. Cell">
        <title>Mgm1p, a dynamin-related GTPase, is essential for fusion of the mitochondrial outer membrane.</title>
        <authorList>
            <person name="Sesaki H."/>
            <person name="Southard S.M."/>
            <person name="Yaffe M.P."/>
            <person name="Jensen R.E."/>
        </authorList>
    </citation>
    <scope>INTERACTION WITH FZO1 AND MGM1</scope>
</reference>
<reference evidence="7" key="7">
    <citation type="journal article" date="2003" name="Proc. Natl. Acad. Sci. U.S.A.">
        <title>The proteome of Saccharomyces cerevisiae mitochondria.</title>
        <authorList>
            <person name="Sickmann A."/>
            <person name="Reinders J."/>
            <person name="Wagner Y."/>
            <person name="Joppich C."/>
            <person name="Zahedi R.P."/>
            <person name="Meyer H.E."/>
            <person name="Schoenfisch B."/>
            <person name="Perschil I."/>
            <person name="Chacinska A."/>
            <person name="Guiard B."/>
            <person name="Rehling P."/>
            <person name="Pfanner N."/>
            <person name="Meisinger C."/>
        </authorList>
    </citation>
    <scope>SUBCELLULAR LOCATION</scope>
    <scope>IDENTIFICATION BY MASS SPECTROMETRY</scope>
    <source>
        <strain>ATCC 76625 / YPH499</strain>
    </source>
</reference>
<reference evidence="7" key="8">
    <citation type="journal article" date="2004" name="J. Biol. Chem.">
        <title>Ugo1p links the Fzo1p and Mgm1p GTPases for mitochondrial fusion.</title>
        <authorList>
            <person name="Sesaki H."/>
            <person name="Jensen R.E."/>
        </authorList>
    </citation>
    <scope>FUNCTION</scope>
    <scope>INTERACTION WITH FZO1 AND MGM1</scope>
</reference>
<reference key="9">
    <citation type="journal article" date="2012" name="Proc. Natl. Acad. Sci. U.S.A.">
        <title>N-terminal acetylome analyses and functional insights of the N-terminal acetyltransferase NatB.</title>
        <authorList>
            <person name="Van Damme P."/>
            <person name="Lasa M."/>
            <person name="Polevoda B."/>
            <person name="Gazquez C."/>
            <person name="Elosegui-Artola A."/>
            <person name="Kim D.S."/>
            <person name="De Juan-Pardo E."/>
            <person name="Demeyer K."/>
            <person name="Hole K."/>
            <person name="Larrea E."/>
            <person name="Timmerman E."/>
            <person name="Prieto J."/>
            <person name="Arnesen T."/>
            <person name="Sherman F."/>
            <person name="Gevaert K."/>
            <person name="Aldabe R."/>
        </authorList>
    </citation>
    <scope>ACETYLATION [LARGE SCALE ANALYSIS] AT MET-1</scope>
    <scope>IDENTIFICATION BY MASS SPECTROMETRY [LARGE SCALE ANALYSIS]</scope>
</reference>
<name>UGO1_YEAST</name>
<comment type="function">
    <text evidence="2 6">Required for mitochondrial fusion as well as normal mitochondrial morphology by bridging the essential interaction between FZO1 and MGM1. May coordinate fusion of inner and outer membranes during mitochondrial fusion.</text>
</comment>
<comment type="subunit">
    <text evidence="3 4 6">Interacts with FZO1 through its cytoplasmic domain and with MGM1 through its mitochondrial intermembrane space domain.</text>
</comment>
<comment type="interaction">
    <interactant intactId="EBI-32955">
        <id>Q03327</id>
    </interactant>
    <interactant intactId="EBI-20900">
        <id>P38297</id>
        <label>FZO1</label>
    </interactant>
    <organismsDiffer>false</organismsDiffer>
    <experiments>2</experiments>
</comment>
<comment type="interaction">
    <interactant intactId="EBI-32955">
        <id>Q03327</id>
    </interactant>
    <interactant intactId="EBI-10865">
        <id>P32266</id>
        <label>MGM1</label>
    </interactant>
    <organismsDiffer>false</organismsDiffer>
    <experiments>2</experiments>
</comment>
<comment type="subcellular location">
    <subcellularLocation>
        <location evidence="2 5">Mitochondrion outer membrane</location>
        <topology evidence="2 5">Single-pass type II membrane protein</topology>
    </subcellularLocation>
</comment>
<keyword id="KW-0007">Acetylation</keyword>
<keyword id="KW-0472">Membrane</keyword>
<keyword id="KW-0496">Mitochondrion</keyword>
<keyword id="KW-1000">Mitochondrion outer membrane</keyword>
<keyword id="KW-1185">Reference proteome</keyword>
<keyword id="KW-0677">Repeat</keyword>
<keyword id="KW-0735">Signal-anchor</keyword>
<keyword id="KW-0812">Transmembrane</keyword>
<keyword id="KW-1133">Transmembrane helix</keyword>
<gene>
    <name evidence="9" type="primary">UGO1</name>
    <name type="ordered locus">YDR470C</name>
</gene>
<evidence type="ECO:0000255" key="1"/>
<evidence type="ECO:0000269" key="2">
    <source>
    </source>
</evidence>
<evidence type="ECO:0000269" key="3">
    <source>
    </source>
</evidence>
<evidence type="ECO:0000269" key="4">
    <source>
    </source>
</evidence>
<evidence type="ECO:0000269" key="5">
    <source>
    </source>
</evidence>
<evidence type="ECO:0000269" key="6">
    <source>
    </source>
</evidence>
<evidence type="ECO:0000305" key="7"/>
<evidence type="ECO:0000312" key="8">
    <source>
        <dbReference type="EMBL" id="AAB64924.2"/>
    </source>
</evidence>
<evidence type="ECO:0000312" key="9">
    <source>
        <dbReference type="SGD" id="S000002878"/>
    </source>
</evidence>
<evidence type="ECO:0007744" key="10">
    <source>
    </source>
</evidence>